<gene>
    <name evidence="15" type="primary">ago</name>
    <name type="ORF">CG15010</name>
</gene>
<proteinExistence type="evidence at protein level"/>
<protein>
    <recommendedName>
        <fullName>F-box/WD repeat-containing protein 7</fullName>
    </recommendedName>
    <alternativeName>
        <fullName>F-box and WD-40 domain-containing protein 7</fullName>
    </alternativeName>
    <alternativeName>
        <fullName>Protein archipelago</fullName>
    </alternativeName>
</protein>
<sequence>MERGCPAASSESVTSAGERTQSAVTSSTSTWVKSQASTSRKTEASEESGLGAVDAEVGAGREAFVSMSTLREDVEDVCVSSNSQHGFAVVLDDESSTFEISSSNSLPTSAGAASTVGVVAVDDSSSTDTLNGGHPDLGHPASSEHSRQGFFNEDNEDPPVVCLINDDDDDEEPEPEEDDEEELIEDEDEDAVDIVTGAISCPNTSQLALADGTIMAADGSKIFLETPVVEEAQPHPGQVVTTGSQSELTGKPKRLSDEFLLGEEDQAENLALGRCIKSEPVNPVDDNPSEGDDGATCFSLHDRLMSVRLKQMSLTANTVSNPSPAASANAAAPEEASTSNSSSTSSSALSRADIESMDLIERRDFETEQRLTGGIILRTSSMVSQNKLNLSLIKSMAGGSKAANGSGTANSDDWPSSSNGRTVSSDSKYTYKDLSTTPTSSRKYTNSRLSKSTAKLNLGSSLGASSCSQHRSGSSSTSKSMESSTSCTGAARTDVYTNTNSNDYPSLAPTTSGSSTSGGSCQQDQEENVSASVSYSSVGSQTSQESGCSRTTAINPTAACSTGSACLGDSQASTSASTSSGAGASNRCQYATTSTTKAARQVNASAQTQERFLTRSNPPAASGAGSVGANPTASVRQRRNGSSDVVHLEVVVEEGAGGGDGGVVEPGDFSAEEPWANCDEENNCSDLEEICTCQNGNGSSYGGSNASLSETFDMDAMDPDEPISLSLSSASAGFTEYSLTNPSSLMSHQRKRKFNEGRLLDGGDYSVTISSSGEVGGPGSGVSDNCRKRIAYDFASTPRSSQHLGPTAVLSVTPSSHLTSSTPGSALGRRTPRSVPSRDNPPPELQHWLAQFQRWSHVERLLALDRLIDHCDPSQVRHMMKVIEPQFQRDFISLLPRELALFVLSYLEPKDLLRAAQTCRSWRFLCDDNLLWKEKCRKAQILAEPRSDRPKRGRDGNMPPIASPWKAAYMRQHIIEMNWRSRPVRKPKVLKGHDDHVITCLQFSGNRIVSGSDDNTLKVWSAVNGKCLRTLVGHTGGVWSSQMSGNIIISGSTDRTLKVWDMDSGACVHTLQGHTSTVRCMHLHGSKVVSGSRDATLRVWDIEQGSCLHVLVGHLAAVRCVQYDGKLIVSGAYDYMVKIWHPERQECLHTLQGHTNRVYSLQFDGLHVVSGSLDTSIRVWDVETGNCKHTLMGHQSLTSGMELRQNILVSGNADSTVKVWDITTGQCLQTLSGPNKHHSAVTCLQFNSRFVVTSSDDGTVKLWDVKTGDFIRNLVALDSGGSGGVVWRIRANDTKLICAVGSRNGTEETKLMVLDFDVEGACVKCS</sequence>
<comment type="function">
    <text evidence="1 6 8 9 11">Substrate recognition component of a SCF (SKP1-CUL1-F-box protein) E3 ubiquitin-protein ligase complex which mediates the ubiquitination and subsequent proteasomal degradation of target proteins (By similarity). Probably recognizes and binds to phosphorylated target proteins (By similarity). In the wing and eye, negatively regulates cell growth and proliferation by mediating the degradation of Myc and cyclin E, respectively (PubMed:11565033, PubMed:15182669). Required for endocycles, but not mitosis in follicle cell epithelium (PubMed:15175253).</text>
</comment>
<comment type="pathway">
    <text>Protein modification; protein ubiquitination.</text>
</comment>
<comment type="subunit">
    <text evidence="6 9 11">Part of a SCF E3 ubiquitin-protein ligase complex. Interacts with Myc and puf (PubMed:15182669, PubMed:24173801). Interacts with CycE (PubMed:11565033).</text>
</comment>
<comment type="interaction">
    <interactant intactId="EBI-138334">
        <id>Q9VZF4</id>
    </interactant>
    <interactant intactId="EBI-120162">
        <id>Q9W4S7</id>
        <label>Myc</label>
    </interactant>
    <organismsDiffer>false</organismsDiffer>
    <experiments>2</experiments>
</comment>
<comment type="subcellular location">
    <subcellularLocation>
        <location evidence="1">Nucleus</location>
    </subcellularLocation>
</comment>
<comment type="tissue specificity">
    <text evidence="6 8 9">Expressed in follicle cell epithelium and imaginal disks, particularly in the morphogenetic furrow.</text>
</comment>
<comment type="disruption phenotype">
    <text evidence="11 12">RNAi-mediated knockdown in the posterior compartment of the larval wing disk increases cell size in the posterior compartment of the adult wing, resulting in an increase in the size of the posterior compartment as well as an increase in the ratio between the posterior and anterior areas. Knockdown of the gene is embryonic lethal. Neuronal-specific knockdown results in deficits in habituation learning, as demonstrated by the light-off reflex habituation assay.</text>
</comment>
<dbReference type="EMBL" id="AE014296">
    <property type="protein sequence ID" value="AAF47869.1"/>
    <property type="molecule type" value="Genomic_DNA"/>
</dbReference>
<dbReference type="EMBL" id="AE014296">
    <property type="protein sequence ID" value="AAG22246.1"/>
    <property type="molecule type" value="Genomic_DNA"/>
</dbReference>
<dbReference type="EMBL" id="AE014296">
    <property type="protein sequence ID" value="AAG22247.1"/>
    <property type="molecule type" value="Genomic_DNA"/>
</dbReference>
<dbReference type="EMBL" id="AY061300">
    <property type="protein sequence ID" value="AAL28848.1"/>
    <property type="molecule type" value="mRNA"/>
</dbReference>
<dbReference type="EMBL" id="AY075401">
    <property type="protein sequence ID" value="AAL68231.1"/>
    <property type="molecule type" value="mRNA"/>
</dbReference>
<dbReference type="RefSeq" id="NP_523922.1">
    <property type="nucleotide sequence ID" value="NM_079198.3"/>
</dbReference>
<dbReference type="RefSeq" id="NP_728964.1">
    <property type="nucleotide sequence ID" value="NM_168072.2"/>
</dbReference>
<dbReference type="RefSeq" id="NP_728965.1">
    <property type="nucleotide sequence ID" value="NM_168073.2"/>
</dbReference>
<dbReference type="SMR" id="Q9VZF4"/>
<dbReference type="BioGRID" id="63994">
    <property type="interactions" value="60"/>
</dbReference>
<dbReference type="DIP" id="DIP-32477N"/>
<dbReference type="FunCoup" id="Q9VZF4">
    <property type="interactions" value="136"/>
</dbReference>
<dbReference type="IntAct" id="Q9VZF4">
    <property type="interactions" value="12"/>
</dbReference>
<dbReference type="STRING" id="7227.FBpp0073101"/>
<dbReference type="GlyGen" id="Q9VZF4">
    <property type="glycosylation" value="1 site"/>
</dbReference>
<dbReference type="iPTMnet" id="Q9VZF4"/>
<dbReference type="PaxDb" id="7227-FBpp0073101"/>
<dbReference type="EnsemblMetazoa" id="FBtr0073245">
    <property type="protein sequence ID" value="FBpp0073101"/>
    <property type="gene ID" value="FBgn0041171"/>
</dbReference>
<dbReference type="EnsemblMetazoa" id="FBtr0073246">
    <property type="protein sequence ID" value="FBpp0073102"/>
    <property type="gene ID" value="FBgn0041171"/>
</dbReference>
<dbReference type="EnsemblMetazoa" id="FBtr0073247">
    <property type="protein sequence ID" value="FBpp0073103"/>
    <property type="gene ID" value="FBgn0041171"/>
</dbReference>
<dbReference type="GeneID" id="38516"/>
<dbReference type="KEGG" id="dme:Dmel_CG15010"/>
<dbReference type="UCSC" id="CG15010-RA">
    <property type="organism name" value="d. melanogaster"/>
</dbReference>
<dbReference type="AGR" id="FB:FBgn0041171"/>
<dbReference type="CTD" id="38516"/>
<dbReference type="FlyBase" id="FBgn0041171">
    <property type="gene designation" value="ago"/>
</dbReference>
<dbReference type="VEuPathDB" id="VectorBase:FBgn0041171"/>
<dbReference type="eggNOG" id="KOG0274">
    <property type="taxonomic scope" value="Eukaryota"/>
</dbReference>
<dbReference type="GeneTree" id="ENSGT00940000154986"/>
<dbReference type="HOGENOM" id="CLU_005079_1_0_1"/>
<dbReference type="InParanoid" id="Q9VZF4"/>
<dbReference type="OMA" id="PIVCLIN"/>
<dbReference type="OrthoDB" id="190105at2759"/>
<dbReference type="PhylomeDB" id="Q9VZF4"/>
<dbReference type="SignaLink" id="Q9VZF4"/>
<dbReference type="UniPathway" id="UPA00143"/>
<dbReference type="BioGRID-ORCS" id="38516">
    <property type="hits" value="0 hits in 1 CRISPR screen"/>
</dbReference>
<dbReference type="GenomeRNAi" id="38516"/>
<dbReference type="PRO" id="PR:Q9VZF4"/>
<dbReference type="Proteomes" id="UP000000803">
    <property type="component" value="Chromosome 3L"/>
</dbReference>
<dbReference type="Bgee" id="FBgn0041171">
    <property type="expression patterns" value="Expressed in eye disc (Drosophila) and 147 other cell types or tissues"/>
</dbReference>
<dbReference type="GO" id="GO:0005634">
    <property type="term" value="C:nucleus"/>
    <property type="evidence" value="ECO:0007669"/>
    <property type="project" value="UniProtKB-SubCell"/>
</dbReference>
<dbReference type="GO" id="GO:0019005">
    <property type="term" value="C:SCF ubiquitin ligase complex"/>
    <property type="evidence" value="ECO:0000250"/>
    <property type="project" value="FlyBase"/>
</dbReference>
<dbReference type="GO" id="GO:0030332">
    <property type="term" value="F:cyclin binding"/>
    <property type="evidence" value="ECO:0000304"/>
    <property type="project" value="FlyBase"/>
</dbReference>
<dbReference type="GO" id="GO:1990381">
    <property type="term" value="F:ubiquitin-specific protease binding"/>
    <property type="evidence" value="ECO:0000353"/>
    <property type="project" value="UniProtKB"/>
</dbReference>
<dbReference type="GO" id="GO:0035147">
    <property type="term" value="P:branch fusion, open tracheal system"/>
    <property type="evidence" value="ECO:0000315"/>
    <property type="project" value="FlyBase"/>
</dbReference>
<dbReference type="GO" id="GO:0071456">
    <property type="term" value="P:cellular response to hypoxia"/>
    <property type="evidence" value="ECO:0000315"/>
    <property type="project" value="FlyBase"/>
</dbReference>
<dbReference type="GO" id="GO:0042023">
    <property type="term" value="P:DNA endoreduplication"/>
    <property type="evidence" value="ECO:0000315"/>
    <property type="project" value="FlyBase"/>
</dbReference>
<dbReference type="GO" id="GO:1900038">
    <property type="term" value="P:negative regulation of cellular response to hypoxia"/>
    <property type="evidence" value="ECO:0000315"/>
    <property type="project" value="FlyBase"/>
</dbReference>
<dbReference type="GO" id="GO:0060253">
    <property type="term" value="P:negative regulation of glial cell proliferation"/>
    <property type="evidence" value="ECO:0000316"/>
    <property type="project" value="FlyBase"/>
</dbReference>
<dbReference type="GO" id="GO:0045926">
    <property type="term" value="P:negative regulation of growth"/>
    <property type="evidence" value="ECO:0000315"/>
    <property type="project" value="FlyBase"/>
</dbReference>
<dbReference type="GO" id="GO:0045571">
    <property type="term" value="P:negative regulation of imaginal disc growth"/>
    <property type="evidence" value="ECO:0000315"/>
    <property type="project" value="FlyBase"/>
</dbReference>
<dbReference type="GO" id="GO:0016567">
    <property type="term" value="P:protein ubiquitination"/>
    <property type="evidence" value="ECO:0007669"/>
    <property type="project" value="UniProtKB-UniPathway"/>
</dbReference>
<dbReference type="GO" id="GO:1903146">
    <property type="term" value="P:regulation of autophagy of mitochondrion"/>
    <property type="evidence" value="ECO:0000315"/>
    <property type="project" value="FlyBase"/>
</dbReference>
<dbReference type="GO" id="GO:0007096">
    <property type="term" value="P:regulation of exit from mitosis"/>
    <property type="evidence" value="ECO:0000304"/>
    <property type="project" value="FlyBase"/>
</dbReference>
<dbReference type="GO" id="GO:0007088">
    <property type="term" value="P:regulation of mitotic nuclear division"/>
    <property type="evidence" value="ECO:0000315"/>
    <property type="project" value="FlyBase"/>
</dbReference>
<dbReference type="GO" id="GO:0030162">
    <property type="term" value="P:regulation of proteolysis"/>
    <property type="evidence" value="ECO:0000304"/>
    <property type="project" value="FlyBase"/>
</dbReference>
<dbReference type="GO" id="GO:0031146">
    <property type="term" value="P:SCF-dependent proteasomal ubiquitin-dependent protein catabolic process"/>
    <property type="evidence" value="ECO:0000250"/>
    <property type="project" value="FlyBase"/>
</dbReference>
<dbReference type="GO" id="GO:0060438">
    <property type="term" value="P:trachea development"/>
    <property type="evidence" value="ECO:0000315"/>
    <property type="project" value="FlyBase"/>
</dbReference>
<dbReference type="GO" id="GO:0007419">
    <property type="term" value="P:ventral cord development"/>
    <property type="evidence" value="ECO:0007001"/>
    <property type="project" value="FlyBase"/>
</dbReference>
<dbReference type="CDD" id="cd22133">
    <property type="entry name" value="F-box_FBXW7"/>
    <property type="match status" value="1"/>
</dbReference>
<dbReference type="CDD" id="cd00200">
    <property type="entry name" value="WD40"/>
    <property type="match status" value="1"/>
</dbReference>
<dbReference type="FunFam" id="1.20.1280.50:FF:000004">
    <property type="entry name" value="F-box/WD repeat-containing protein 7 isoform X1"/>
    <property type="match status" value="1"/>
</dbReference>
<dbReference type="FunFam" id="2.130.10.10:FF:000032">
    <property type="entry name" value="F-box/WD repeat-containing protein 7 isoform X1"/>
    <property type="match status" value="1"/>
</dbReference>
<dbReference type="Gene3D" id="1.20.1280.50">
    <property type="match status" value="1"/>
</dbReference>
<dbReference type="Gene3D" id="2.130.10.10">
    <property type="entry name" value="YVTN repeat-like/Quinoprotein amine dehydrogenase"/>
    <property type="match status" value="1"/>
</dbReference>
<dbReference type="InterPro" id="IPR036047">
    <property type="entry name" value="F-box-like_dom_sf"/>
</dbReference>
<dbReference type="InterPro" id="IPR001810">
    <property type="entry name" value="F-box_dom"/>
</dbReference>
<dbReference type="InterPro" id="IPR020472">
    <property type="entry name" value="G-protein_beta_WD-40_rep"/>
</dbReference>
<dbReference type="InterPro" id="IPR015943">
    <property type="entry name" value="WD40/YVTN_repeat-like_dom_sf"/>
</dbReference>
<dbReference type="InterPro" id="IPR019775">
    <property type="entry name" value="WD40_repeat_CS"/>
</dbReference>
<dbReference type="InterPro" id="IPR036322">
    <property type="entry name" value="WD40_repeat_dom_sf"/>
</dbReference>
<dbReference type="InterPro" id="IPR001680">
    <property type="entry name" value="WD40_rpt"/>
</dbReference>
<dbReference type="PANTHER" id="PTHR19849:SF1">
    <property type="entry name" value="F-BOX_WD REPEAT-CONTAINING PROTEIN 7"/>
    <property type="match status" value="1"/>
</dbReference>
<dbReference type="PANTHER" id="PTHR19849">
    <property type="entry name" value="PHOSPHOLIPASE A-2-ACTIVATING PROTEIN"/>
    <property type="match status" value="1"/>
</dbReference>
<dbReference type="Pfam" id="PF12937">
    <property type="entry name" value="F-box-like"/>
    <property type="match status" value="1"/>
</dbReference>
<dbReference type="Pfam" id="PF00400">
    <property type="entry name" value="WD40"/>
    <property type="match status" value="7"/>
</dbReference>
<dbReference type="PRINTS" id="PR00320">
    <property type="entry name" value="GPROTEINBRPT"/>
</dbReference>
<dbReference type="SMART" id="SM00256">
    <property type="entry name" value="FBOX"/>
    <property type="match status" value="1"/>
</dbReference>
<dbReference type="SMART" id="SM00320">
    <property type="entry name" value="WD40"/>
    <property type="match status" value="7"/>
</dbReference>
<dbReference type="SUPFAM" id="SSF81383">
    <property type="entry name" value="F-box domain"/>
    <property type="match status" value="1"/>
</dbReference>
<dbReference type="SUPFAM" id="SSF50978">
    <property type="entry name" value="WD40 repeat-like"/>
    <property type="match status" value="1"/>
</dbReference>
<dbReference type="PROSITE" id="PS50181">
    <property type="entry name" value="FBOX"/>
    <property type="match status" value="1"/>
</dbReference>
<dbReference type="PROSITE" id="PS00678">
    <property type="entry name" value="WD_REPEATS_1"/>
    <property type="match status" value="5"/>
</dbReference>
<dbReference type="PROSITE" id="PS50082">
    <property type="entry name" value="WD_REPEATS_2"/>
    <property type="match status" value="7"/>
</dbReference>
<dbReference type="PROSITE" id="PS50294">
    <property type="entry name" value="WD_REPEATS_REGION"/>
    <property type="match status" value="1"/>
</dbReference>
<reference evidence="13 14" key="1">
    <citation type="journal article" date="2000" name="Science">
        <title>The genome sequence of Drosophila melanogaster.</title>
        <authorList>
            <person name="Adams M.D."/>
            <person name="Celniker S.E."/>
            <person name="Holt R.A."/>
            <person name="Evans C.A."/>
            <person name="Gocayne J.D."/>
            <person name="Amanatides P.G."/>
            <person name="Scherer S.E."/>
            <person name="Li P.W."/>
            <person name="Hoskins R.A."/>
            <person name="Galle R.F."/>
            <person name="George R.A."/>
            <person name="Lewis S.E."/>
            <person name="Richards S."/>
            <person name="Ashburner M."/>
            <person name="Henderson S.N."/>
            <person name="Sutton G.G."/>
            <person name="Wortman J.R."/>
            <person name="Yandell M.D."/>
            <person name="Zhang Q."/>
            <person name="Chen L.X."/>
            <person name="Brandon R.C."/>
            <person name="Rogers Y.-H.C."/>
            <person name="Blazej R.G."/>
            <person name="Champe M."/>
            <person name="Pfeiffer B.D."/>
            <person name="Wan K.H."/>
            <person name="Doyle C."/>
            <person name="Baxter E.G."/>
            <person name="Helt G."/>
            <person name="Nelson C.R."/>
            <person name="Miklos G.L.G."/>
            <person name="Abril J.F."/>
            <person name="Agbayani A."/>
            <person name="An H.-J."/>
            <person name="Andrews-Pfannkoch C."/>
            <person name="Baldwin D."/>
            <person name="Ballew R.M."/>
            <person name="Basu A."/>
            <person name="Baxendale J."/>
            <person name="Bayraktaroglu L."/>
            <person name="Beasley E.M."/>
            <person name="Beeson K.Y."/>
            <person name="Benos P.V."/>
            <person name="Berman B.P."/>
            <person name="Bhandari D."/>
            <person name="Bolshakov S."/>
            <person name="Borkova D."/>
            <person name="Botchan M.R."/>
            <person name="Bouck J."/>
            <person name="Brokstein P."/>
            <person name="Brottier P."/>
            <person name="Burtis K.C."/>
            <person name="Busam D.A."/>
            <person name="Butler H."/>
            <person name="Cadieu E."/>
            <person name="Center A."/>
            <person name="Chandra I."/>
            <person name="Cherry J.M."/>
            <person name="Cawley S."/>
            <person name="Dahlke C."/>
            <person name="Davenport L.B."/>
            <person name="Davies P."/>
            <person name="de Pablos B."/>
            <person name="Delcher A."/>
            <person name="Deng Z."/>
            <person name="Mays A.D."/>
            <person name="Dew I."/>
            <person name="Dietz S.M."/>
            <person name="Dodson K."/>
            <person name="Doup L.E."/>
            <person name="Downes M."/>
            <person name="Dugan-Rocha S."/>
            <person name="Dunkov B.C."/>
            <person name="Dunn P."/>
            <person name="Durbin K.J."/>
            <person name="Evangelista C.C."/>
            <person name="Ferraz C."/>
            <person name="Ferriera S."/>
            <person name="Fleischmann W."/>
            <person name="Fosler C."/>
            <person name="Gabrielian A.E."/>
            <person name="Garg N.S."/>
            <person name="Gelbart W.M."/>
            <person name="Glasser K."/>
            <person name="Glodek A."/>
            <person name="Gong F."/>
            <person name="Gorrell J.H."/>
            <person name="Gu Z."/>
            <person name="Guan P."/>
            <person name="Harris M."/>
            <person name="Harris N.L."/>
            <person name="Harvey D.A."/>
            <person name="Heiman T.J."/>
            <person name="Hernandez J.R."/>
            <person name="Houck J."/>
            <person name="Hostin D."/>
            <person name="Houston K.A."/>
            <person name="Howland T.J."/>
            <person name="Wei M.-H."/>
            <person name="Ibegwam C."/>
            <person name="Jalali M."/>
            <person name="Kalush F."/>
            <person name="Karpen G.H."/>
            <person name="Ke Z."/>
            <person name="Kennison J.A."/>
            <person name="Ketchum K.A."/>
            <person name="Kimmel B.E."/>
            <person name="Kodira C.D."/>
            <person name="Kraft C.L."/>
            <person name="Kravitz S."/>
            <person name="Kulp D."/>
            <person name="Lai Z."/>
            <person name="Lasko P."/>
            <person name="Lei Y."/>
            <person name="Levitsky A.A."/>
            <person name="Li J.H."/>
            <person name="Li Z."/>
            <person name="Liang Y."/>
            <person name="Lin X."/>
            <person name="Liu X."/>
            <person name="Mattei B."/>
            <person name="McIntosh T.C."/>
            <person name="McLeod M.P."/>
            <person name="McPherson D."/>
            <person name="Merkulov G."/>
            <person name="Milshina N.V."/>
            <person name="Mobarry C."/>
            <person name="Morris J."/>
            <person name="Moshrefi A."/>
            <person name="Mount S.M."/>
            <person name="Moy M."/>
            <person name="Murphy B."/>
            <person name="Murphy L."/>
            <person name="Muzny D.M."/>
            <person name="Nelson D.L."/>
            <person name="Nelson D.R."/>
            <person name="Nelson K.A."/>
            <person name="Nixon K."/>
            <person name="Nusskern D.R."/>
            <person name="Pacleb J.M."/>
            <person name="Palazzolo M."/>
            <person name="Pittman G.S."/>
            <person name="Pan S."/>
            <person name="Pollard J."/>
            <person name="Puri V."/>
            <person name="Reese M.G."/>
            <person name="Reinert K."/>
            <person name="Remington K."/>
            <person name="Saunders R.D.C."/>
            <person name="Scheeler F."/>
            <person name="Shen H."/>
            <person name="Shue B.C."/>
            <person name="Siden-Kiamos I."/>
            <person name="Simpson M."/>
            <person name="Skupski M.P."/>
            <person name="Smith T.J."/>
            <person name="Spier E."/>
            <person name="Spradling A.C."/>
            <person name="Stapleton M."/>
            <person name="Strong R."/>
            <person name="Sun E."/>
            <person name="Svirskas R."/>
            <person name="Tector C."/>
            <person name="Turner R."/>
            <person name="Venter E."/>
            <person name="Wang A.H."/>
            <person name="Wang X."/>
            <person name="Wang Z.-Y."/>
            <person name="Wassarman D.A."/>
            <person name="Weinstock G.M."/>
            <person name="Weissenbach J."/>
            <person name="Williams S.M."/>
            <person name="Woodage T."/>
            <person name="Worley K.C."/>
            <person name="Wu D."/>
            <person name="Yang S."/>
            <person name="Yao Q.A."/>
            <person name="Ye J."/>
            <person name="Yeh R.-F."/>
            <person name="Zaveri J.S."/>
            <person name="Zhan M."/>
            <person name="Zhang G."/>
            <person name="Zhao Q."/>
            <person name="Zheng L."/>
            <person name="Zheng X.H."/>
            <person name="Zhong F.N."/>
            <person name="Zhong W."/>
            <person name="Zhou X."/>
            <person name="Zhu S.C."/>
            <person name="Zhu X."/>
            <person name="Smith H.O."/>
            <person name="Gibbs R.A."/>
            <person name="Myers E.W."/>
            <person name="Rubin G.M."/>
            <person name="Venter J.C."/>
        </authorList>
    </citation>
    <scope>NUCLEOTIDE SEQUENCE [LARGE SCALE GENOMIC DNA]</scope>
    <source>
        <strain evidence="5">Berkeley</strain>
    </source>
</reference>
<reference evidence="13 14" key="2">
    <citation type="journal article" date="2002" name="Genome Biol.">
        <title>Annotation of the Drosophila melanogaster euchromatic genome: a systematic review.</title>
        <authorList>
            <person name="Misra S."/>
            <person name="Crosby M.A."/>
            <person name="Mungall C.J."/>
            <person name="Matthews B.B."/>
            <person name="Campbell K.S."/>
            <person name="Hradecky P."/>
            <person name="Huang Y."/>
            <person name="Kaminker J.S."/>
            <person name="Millburn G.H."/>
            <person name="Prochnik S.E."/>
            <person name="Smith C.D."/>
            <person name="Tupy J.L."/>
            <person name="Whitfield E.J."/>
            <person name="Bayraktaroglu L."/>
            <person name="Berman B.P."/>
            <person name="Bettencourt B.R."/>
            <person name="Celniker S.E."/>
            <person name="de Grey A.D.N.J."/>
            <person name="Drysdale R.A."/>
            <person name="Harris N.L."/>
            <person name="Richter J."/>
            <person name="Russo S."/>
            <person name="Schroeder A.J."/>
            <person name="Shu S.Q."/>
            <person name="Stapleton M."/>
            <person name="Yamada C."/>
            <person name="Ashburner M."/>
            <person name="Gelbart W.M."/>
            <person name="Rubin G.M."/>
            <person name="Lewis S.E."/>
        </authorList>
    </citation>
    <scope>GENOME REANNOTATION</scope>
    <source>
        <strain>Berkeley</strain>
    </source>
</reference>
<reference evidence="13 15" key="3">
    <citation type="journal article" date="2002" name="Genome Biol.">
        <title>A Drosophila full-length cDNA resource.</title>
        <authorList>
            <person name="Stapleton M."/>
            <person name="Carlson J.W."/>
            <person name="Brokstein P."/>
            <person name="Yu C."/>
            <person name="Champe M."/>
            <person name="George R.A."/>
            <person name="Guarin H."/>
            <person name="Kronmiller B."/>
            <person name="Pacleb J.M."/>
            <person name="Park S."/>
            <person name="Wan K.H."/>
            <person name="Rubin G.M."/>
            <person name="Celniker S.E."/>
        </authorList>
    </citation>
    <scope>NUCLEOTIDE SEQUENCE [LARGE SCALE MRNA]</scope>
    <source>
        <strain evidence="7">Berkeley</strain>
        <tissue evidence="7">Embryo</tissue>
    </source>
</reference>
<reference evidence="13" key="4">
    <citation type="journal article" date="2001" name="Nature">
        <title>Archipelago regulates cyclin E levels in Drosophila and is mutated in human cancer cell lines.</title>
        <authorList>
            <person name="Moberg K.H."/>
            <person name="Bell D.W."/>
            <person name="Wahrer D.C.R."/>
            <person name="Haber D.A."/>
            <person name="Hariharan I.K."/>
        </authorList>
    </citation>
    <scope>FUNCTION</scope>
    <scope>INTERACTION WITH CYCE</scope>
    <scope>TISSUE SPECIFICITY</scope>
    <scope>MUTAGENESIS OF ALA-1117 AND GLY-1131</scope>
</reference>
<reference evidence="13" key="5">
    <citation type="journal article" date="2004" name="Curr. Biol.">
        <title>The Drosophila F box protein archipelago regulates dMyc protein levels in vivo.</title>
        <authorList>
            <person name="Moberg K.H."/>
            <person name="Mukherjee A."/>
            <person name="Veraksa A."/>
            <person name="Artavanis-Tsakonas S."/>
            <person name="Hariharan I.K."/>
        </authorList>
    </citation>
    <scope>FUNCTION</scope>
    <scope>INTERACTION WITH MYC</scope>
    <scope>TISSUE SPECIFICITY</scope>
</reference>
<reference evidence="13" key="6">
    <citation type="journal article" date="2004" name="Development">
        <title>The mitotic-to-endocycle switch in Drosophila follicle cells is executed by Notch-dependent regulation of G1/S, G2/M and M/G1 cell-cycle transitions.</title>
        <authorList>
            <person name="Shcherbata H.R."/>
            <person name="Althauser C."/>
            <person name="Findley S.D."/>
            <person name="Ruohola-Baker H."/>
        </authorList>
    </citation>
    <scope>FUNCTION</scope>
    <scope>TISSUE SPECIFICITY</scope>
</reference>
<reference key="7">
    <citation type="journal article" date="2008" name="J. Proteome Res.">
        <title>Phosphoproteome analysis of Drosophila melanogaster embryos.</title>
        <authorList>
            <person name="Zhai B."/>
            <person name="Villen J."/>
            <person name="Beausoleil S.A."/>
            <person name="Mintseris J."/>
            <person name="Gygi S.P."/>
        </authorList>
    </citation>
    <scope>PHOSPHORYLATION [LARGE SCALE ANALYSIS] AT THR-813 AND SER-825</scope>
    <scope>IDENTIFICATION BY MASS SPECTROMETRY</scope>
    <source>
        <tissue>Embryo</tissue>
    </source>
</reference>
<reference key="8">
    <citation type="journal article" date="2013" name="Development">
        <title>The Drosophila ubiquitin-specific protease Puffyeye regulates dMyc-mediated growth.</title>
        <authorList>
            <person name="Li L."/>
            <person name="Anderson S."/>
            <person name="Secombe J."/>
            <person name="Eisenman R.N."/>
        </authorList>
    </citation>
    <scope>INTERACTION WITH MYC AND PUF</scope>
    <scope>DISRUPTION PHENOTYPE</scope>
</reference>
<reference key="9">
    <citation type="journal article" date="2022" name="Am. J. Hum. Genet.">
        <title>Germline variants in tumor suppressor FBXW7 lead to impaired ubiquitination and a neurodevelopmental syndrome.</title>
        <authorList>
            <consortium name="TUDP Study Group"/>
            <consortium name="Broad Center for Mendelian Genomics"/>
            <person name="Stephenson S.E.M."/>
            <person name="Costain G."/>
            <person name="Blok L.E.R."/>
            <person name="Silk M.A."/>
            <person name="Nguyen T.B."/>
            <person name="Dong X."/>
            <person name="Alhuzaimi D.E."/>
            <person name="Dowling J.J."/>
            <person name="Walker S."/>
            <person name="Amburgey K."/>
            <person name="Hayeems R.Z."/>
            <person name="Rodan L.H."/>
            <person name="Schwartz M.A."/>
            <person name="Picker J."/>
            <person name="Lynch S.A."/>
            <person name="Gupta A."/>
            <person name="Rasmussen K.J."/>
            <person name="Schimmenti L.A."/>
            <person name="Klee E.W."/>
            <person name="Niu Z."/>
            <person name="Agre K.E."/>
            <person name="Chilton I."/>
            <person name="Chung W.K."/>
            <person name="Revah-Politi A."/>
            <person name="Au P.Y.B."/>
            <person name="Griffith C."/>
            <person name="Racobaldo M."/>
            <person name="Raas-Rothschild A."/>
            <person name="Ben Zeev B."/>
            <person name="Barel O."/>
            <person name="Moutton S."/>
            <person name="Morice-Picard F."/>
            <person name="Carmignac V."/>
            <person name="Cornaton J."/>
            <person name="Marle N."/>
            <person name="Devinsky O."/>
            <person name="Stimach C."/>
            <person name="Wechsler S.B."/>
            <person name="Hainline B.E."/>
            <person name="Sapp K."/>
            <person name="Willems M."/>
            <person name="Bruel A.L."/>
            <person name="Dias K.R."/>
            <person name="Evans C.A."/>
            <person name="Roscioli T."/>
            <person name="Sachdev R."/>
            <person name="Temple S.E.L."/>
            <person name="Zhu Y."/>
            <person name="Baker J.J."/>
            <person name="Scheffer I.E."/>
            <person name="Gardiner F.J."/>
            <person name="Schneider A.L."/>
            <person name="Muir A.M."/>
            <person name="Mefford H.C."/>
            <person name="Crunk A."/>
            <person name="Heise E.M."/>
            <person name="Millan F."/>
            <person name="Monaghan K.G."/>
            <person name="Person R."/>
            <person name="Rhodes L."/>
            <person name="Richards S."/>
            <person name="Wentzensen I.M."/>
            <person name="Cogne B."/>
            <person name="Isidor B."/>
            <person name="Nizon M."/>
            <person name="Vincent M."/>
            <person name="Besnard T."/>
            <person name="Piton A."/>
            <person name="Marcelis C."/>
            <person name="Kato K."/>
            <person name="Koyama N."/>
            <person name="Ogi T."/>
            <person name="Goh E.S."/>
            <person name="Richmond C."/>
            <person name="Amor D.J."/>
            <person name="Boyce J.O."/>
            <person name="Morgan A.T."/>
            <person name="Hildebrand M.S."/>
            <person name="Kaspi A."/>
            <person name="Bahlo M."/>
            <person name="Fridriksdottir R."/>
            <person name="Katrinardottir H."/>
            <person name="Sulem P."/>
            <person name="Stefansson K."/>
            <person name="Bjoernsson H.T."/>
            <person name="Mandelstam S."/>
            <person name="Morleo M."/>
            <person name="Mariani M."/>
            <person name="Scala M."/>
            <person name="Accogli A."/>
            <person name="Torella A."/>
            <person name="Capra V."/>
            <person name="Wallis M."/>
            <person name="Jansen S."/>
            <person name="Weisfisz Q."/>
            <person name="de Haan H."/>
            <person name="Sadedin S."/>
            <person name="Lim S.C."/>
            <person name="White S.M."/>
            <person name="Ascher D.B."/>
            <person name="Schenck A."/>
            <person name="Lockhart P.J."/>
            <person name="Christodoulou J."/>
            <person name="Tan T.Y."/>
        </authorList>
    </citation>
    <scope>DISRUPTION PHENOTYPE</scope>
</reference>
<accession>Q9VZF4</accession>
<accession>A4V1G6</accession>
<name>FBXW7_DROME</name>
<organism>
    <name type="scientific">Drosophila melanogaster</name>
    <name type="common">Fruit fly</name>
    <dbReference type="NCBI Taxonomy" id="7227"/>
    <lineage>
        <taxon>Eukaryota</taxon>
        <taxon>Metazoa</taxon>
        <taxon>Ecdysozoa</taxon>
        <taxon>Arthropoda</taxon>
        <taxon>Hexapoda</taxon>
        <taxon>Insecta</taxon>
        <taxon>Pterygota</taxon>
        <taxon>Neoptera</taxon>
        <taxon>Endopterygota</taxon>
        <taxon>Diptera</taxon>
        <taxon>Brachycera</taxon>
        <taxon>Muscomorpha</taxon>
        <taxon>Ephydroidea</taxon>
        <taxon>Drosophilidae</taxon>
        <taxon>Drosophila</taxon>
        <taxon>Sophophora</taxon>
    </lineage>
</organism>
<feature type="chain" id="PRO_0000050996" description="F-box/WD repeat-containing protein 7">
    <location>
        <begin position="1"/>
        <end position="1326"/>
    </location>
</feature>
<feature type="domain" description="F-box" evidence="3">
    <location>
        <begin position="889"/>
        <end position="935"/>
    </location>
</feature>
<feature type="repeat" description="WD 1" evidence="2">
    <location>
        <begin position="992"/>
        <end position="1030"/>
    </location>
</feature>
<feature type="repeat" description="WD 2" evidence="2">
    <location>
        <begin position="1033"/>
        <end position="1070"/>
    </location>
</feature>
<feature type="repeat" description="WD 3" evidence="2">
    <location>
        <begin position="1073"/>
        <end position="1110"/>
    </location>
</feature>
<feature type="repeat" description="WD 4" evidence="2">
    <location>
        <begin position="1113"/>
        <end position="1150"/>
    </location>
</feature>
<feature type="repeat" description="WD 5" evidence="2">
    <location>
        <begin position="1153"/>
        <end position="1190"/>
    </location>
</feature>
<feature type="repeat" description="WD 6" evidence="2">
    <location>
        <begin position="1193"/>
        <end position="1232"/>
    </location>
</feature>
<feature type="repeat" description="WD 7" evidence="2">
    <location>
        <begin position="1236"/>
        <end position="1273"/>
    </location>
</feature>
<feature type="region of interest" description="Disordered" evidence="4">
    <location>
        <begin position="1"/>
        <end position="58"/>
    </location>
</feature>
<feature type="region of interest" description="Disordered" evidence="4">
    <location>
        <begin position="123"/>
        <end position="187"/>
    </location>
</feature>
<feature type="region of interest" description="Disordered" evidence="4">
    <location>
        <begin position="318"/>
        <end position="351"/>
    </location>
</feature>
<feature type="region of interest" description="Disordered" evidence="4">
    <location>
        <begin position="399"/>
        <end position="549"/>
    </location>
</feature>
<feature type="region of interest" description="Disordered" evidence="4">
    <location>
        <begin position="615"/>
        <end position="642"/>
    </location>
</feature>
<feature type="region of interest" description="Disordered" evidence="4">
    <location>
        <begin position="797"/>
        <end position="843"/>
    </location>
</feature>
<feature type="compositionally biased region" description="Polar residues" evidence="4">
    <location>
        <begin position="9"/>
        <end position="39"/>
    </location>
</feature>
<feature type="compositionally biased region" description="Acidic residues" evidence="4">
    <location>
        <begin position="165"/>
        <end position="187"/>
    </location>
</feature>
<feature type="compositionally biased region" description="Low complexity" evidence="4">
    <location>
        <begin position="320"/>
        <end position="348"/>
    </location>
</feature>
<feature type="compositionally biased region" description="Polar residues" evidence="4">
    <location>
        <begin position="403"/>
        <end position="464"/>
    </location>
</feature>
<feature type="compositionally biased region" description="Low complexity" evidence="4">
    <location>
        <begin position="465"/>
        <end position="486"/>
    </location>
</feature>
<feature type="compositionally biased region" description="Polar residues" evidence="4">
    <location>
        <begin position="495"/>
        <end position="504"/>
    </location>
</feature>
<feature type="compositionally biased region" description="Low complexity" evidence="4">
    <location>
        <begin position="510"/>
        <end position="520"/>
    </location>
</feature>
<feature type="compositionally biased region" description="Low complexity" evidence="4">
    <location>
        <begin position="528"/>
        <end position="546"/>
    </location>
</feature>
<feature type="compositionally biased region" description="Low complexity" evidence="4">
    <location>
        <begin position="616"/>
        <end position="631"/>
    </location>
</feature>
<feature type="compositionally biased region" description="Polar residues" evidence="4">
    <location>
        <begin position="632"/>
        <end position="642"/>
    </location>
</feature>
<feature type="compositionally biased region" description="Polar residues" evidence="4">
    <location>
        <begin position="797"/>
        <end position="824"/>
    </location>
</feature>
<feature type="modified residue" description="Phosphothreonine" evidence="10">
    <location>
        <position position="813"/>
    </location>
</feature>
<feature type="modified residue" description="Phosphoserine" evidence="10">
    <location>
        <position position="825"/>
    </location>
</feature>
<feature type="mutagenesis site" description="In ago-4; increased cell proliferation." evidence="6">
    <original>A</original>
    <variation>V</variation>
    <location>
        <position position="1117"/>
    </location>
</feature>
<feature type="mutagenesis site" description="In ago-3; increased cell proliferation and decrease in ability to bind CycE." evidence="6">
    <original>G</original>
    <variation>E</variation>
    <location>
        <position position="1131"/>
    </location>
</feature>
<evidence type="ECO:0000250" key="1"/>
<evidence type="ECO:0000255" key="2"/>
<evidence type="ECO:0000255" key="3">
    <source>
        <dbReference type="PROSITE-ProRule" id="PRU00080"/>
    </source>
</evidence>
<evidence type="ECO:0000256" key="4">
    <source>
        <dbReference type="SAM" id="MobiDB-lite"/>
    </source>
</evidence>
<evidence type="ECO:0000269" key="5">
    <source>
    </source>
</evidence>
<evidence type="ECO:0000269" key="6">
    <source>
    </source>
</evidence>
<evidence type="ECO:0000269" key="7">
    <source>
    </source>
</evidence>
<evidence type="ECO:0000269" key="8">
    <source>
    </source>
</evidence>
<evidence type="ECO:0000269" key="9">
    <source>
    </source>
</evidence>
<evidence type="ECO:0000269" key="10">
    <source>
    </source>
</evidence>
<evidence type="ECO:0000269" key="11">
    <source>
    </source>
</evidence>
<evidence type="ECO:0000269" key="12">
    <source>
    </source>
</evidence>
<evidence type="ECO:0000305" key="13"/>
<evidence type="ECO:0000312" key="14">
    <source>
        <dbReference type="EMBL" id="AAF47869.1"/>
    </source>
</evidence>
<evidence type="ECO:0000312" key="15">
    <source>
        <dbReference type="EMBL" id="AAL28848.1"/>
    </source>
</evidence>
<keyword id="KW-0131">Cell cycle</keyword>
<keyword id="KW-0539">Nucleus</keyword>
<keyword id="KW-0597">Phosphoprotein</keyword>
<keyword id="KW-1185">Reference proteome</keyword>
<keyword id="KW-0677">Repeat</keyword>
<keyword id="KW-0833">Ubl conjugation pathway</keyword>
<keyword id="KW-0853">WD repeat</keyword>